<sequence length="202" mass="22955">MLVETGFCRVGQAGLELLSSSDKAAGLDLPKCWDYRHEPPRLAPLLIFNPHPSTVLSCNCEYNSFFEFCDSLQQIVIPERVLGTPRHIFPLPLLFSHFLWSKLKEAPACLLQGSSEHTEIICDLISSSKQFIKKFLSNKPSALHGGDADENDFLQLITRLQKLLFKSLSMYVCVHIHQHTHACPQLSCLHQNQDEELFYCQN</sequence>
<name>YP007_HUMAN</name>
<protein>
    <recommendedName>
        <fullName>Putative uncharacterized protein FLJ45256</fullName>
    </recommendedName>
</protein>
<proteinExistence type="evidence at transcript level"/>
<feature type="chain" id="PRO_0000318913" description="Putative uncharacterized protein FLJ45256">
    <location>
        <begin position="1"/>
        <end position="202"/>
    </location>
</feature>
<dbReference type="EMBL" id="AK127191">
    <property type="protein sequence ID" value="BAC86880.1"/>
    <property type="molecule type" value="mRNA"/>
</dbReference>
<dbReference type="BioMuta" id="-"/>
<dbReference type="neXtProt" id="NX_Q6ZSR6"/>
<dbReference type="InParanoid" id="Q6ZSR6"/>
<dbReference type="PAN-GO" id="Q6ZSR6">
    <property type="GO annotations" value="0 GO annotations based on evolutionary models"/>
</dbReference>
<dbReference type="Pharos" id="Q6ZSR6">
    <property type="development level" value="Tdark"/>
</dbReference>
<dbReference type="Proteomes" id="UP000005640">
    <property type="component" value="Unplaced"/>
</dbReference>
<dbReference type="RNAct" id="Q6ZSR6">
    <property type="molecule type" value="protein"/>
</dbReference>
<organism>
    <name type="scientific">Homo sapiens</name>
    <name type="common">Human</name>
    <dbReference type="NCBI Taxonomy" id="9606"/>
    <lineage>
        <taxon>Eukaryota</taxon>
        <taxon>Metazoa</taxon>
        <taxon>Chordata</taxon>
        <taxon>Craniata</taxon>
        <taxon>Vertebrata</taxon>
        <taxon>Euteleostomi</taxon>
        <taxon>Mammalia</taxon>
        <taxon>Eutheria</taxon>
        <taxon>Euarchontoglires</taxon>
        <taxon>Primates</taxon>
        <taxon>Haplorrhini</taxon>
        <taxon>Catarrhini</taxon>
        <taxon>Hominidae</taxon>
        <taxon>Homo</taxon>
    </lineage>
</organism>
<accession>Q6ZSR6</accession>
<accession>A2RU57</accession>
<keyword id="KW-1185">Reference proteome</keyword>
<reference key="1">
    <citation type="journal article" date="2004" name="Nat. Genet.">
        <title>Complete sequencing and characterization of 21,243 full-length human cDNAs.</title>
        <authorList>
            <person name="Ota T."/>
            <person name="Suzuki Y."/>
            <person name="Nishikawa T."/>
            <person name="Otsuki T."/>
            <person name="Sugiyama T."/>
            <person name="Irie R."/>
            <person name="Wakamatsu A."/>
            <person name="Hayashi K."/>
            <person name="Sato H."/>
            <person name="Nagai K."/>
            <person name="Kimura K."/>
            <person name="Makita H."/>
            <person name="Sekine M."/>
            <person name="Obayashi M."/>
            <person name="Nishi T."/>
            <person name="Shibahara T."/>
            <person name="Tanaka T."/>
            <person name="Ishii S."/>
            <person name="Yamamoto J."/>
            <person name="Saito K."/>
            <person name="Kawai Y."/>
            <person name="Isono Y."/>
            <person name="Nakamura Y."/>
            <person name="Nagahari K."/>
            <person name="Murakami K."/>
            <person name="Yasuda T."/>
            <person name="Iwayanagi T."/>
            <person name="Wagatsuma M."/>
            <person name="Shiratori A."/>
            <person name="Sudo H."/>
            <person name="Hosoiri T."/>
            <person name="Kaku Y."/>
            <person name="Kodaira H."/>
            <person name="Kondo H."/>
            <person name="Sugawara M."/>
            <person name="Takahashi M."/>
            <person name="Kanda K."/>
            <person name="Yokoi T."/>
            <person name="Furuya T."/>
            <person name="Kikkawa E."/>
            <person name="Omura Y."/>
            <person name="Abe K."/>
            <person name="Kamihara K."/>
            <person name="Katsuta N."/>
            <person name="Sato K."/>
            <person name="Tanikawa M."/>
            <person name="Yamazaki M."/>
            <person name="Ninomiya K."/>
            <person name="Ishibashi T."/>
            <person name="Yamashita H."/>
            <person name="Murakawa K."/>
            <person name="Fujimori K."/>
            <person name="Tanai H."/>
            <person name="Kimata M."/>
            <person name="Watanabe M."/>
            <person name="Hiraoka S."/>
            <person name="Chiba Y."/>
            <person name="Ishida S."/>
            <person name="Ono Y."/>
            <person name="Takiguchi S."/>
            <person name="Watanabe S."/>
            <person name="Yosida M."/>
            <person name="Hotuta T."/>
            <person name="Kusano J."/>
            <person name="Kanehori K."/>
            <person name="Takahashi-Fujii A."/>
            <person name="Hara H."/>
            <person name="Tanase T.-O."/>
            <person name="Nomura Y."/>
            <person name="Togiya S."/>
            <person name="Komai F."/>
            <person name="Hara R."/>
            <person name="Takeuchi K."/>
            <person name="Arita M."/>
            <person name="Imose N."/>
            <person name="Musashino K."/>
            <person name="Yuuki H."/>
            <person name="Oshima A."/>
            <person name="Sasaki N."/>
            <person name="Aotsuka S."/>
            <person name="Yoshikawa Y."/>
            <person name="Matsunawa H."/>
            <person name="Ichihara T."/>
            <person name="Shiohata N."/>
            <person name="Sano S."/>
            <person name="Moriya S."/>
            <person name="Momiyama H."/>
            <person name="Satoh N."/>
            <person name="Takami S."/>
            <person name="Terashima Y."/>
            <person name="Suzuki O."/>
            <person name="Nakagawa S."/>
            <person name="Senoh A."/>
            <person name="Mizoguchi H."/>
            <person name="Goto Y."/>
            <person name="Shimizu F."/>
            <person name="Wakebe H."/>
            <person name="Hishigaki H."/>
            <person name="Watanabe T."/>
            <person name="Sugiyama A."/>
            <person name="Takemoto M."/>
            <person name="Kawakami B."/>
            <person name="Yamazaki M."/>
            <person name="Watanabe K."/>
            <person name="Kumagai A."/>
            <person name="Itakura S."/>
            <person name="Fukuzumi Y."/>
            <person name="Fujimori Y."/>
            <person name="Komiyama M."/>
            <person name="Tashiro H."/>
            <person name="Tanigami A."/>
            <person name="Fujiwara T."/>
            <person name="Ono T."/>
            <person name="Yamada K."/>
            <person name="Fujii Y."/>
            <person name="Ozaki K."/>
            <person name="Hirao M."/>
            <person name="Ohmori Y."/>
            <person name="Kawabata A."/>
            <person name="Hikiji T."/>
            <person name="Kobatake N."/>
            <person name="Inagaki H."/>
            <person name="Ikema Y."/>
            <person name="Okamoto S."/>
            <person name="Okitani R."/>
            <person name="Kawakami T."/>
            <person name="Noguchi S."/>
            <person name="Itoh T."/>
            <person name="Shigeta K."/>
            <person name="Senba T."/>
            <person name="Matsumura K."/>
            <person name="Nakajima Y."/>
            <person name="Mizuno T."/>
            <person name="Morinaga M."/>
            <person name="Sasaki M."/>
            <person name="Togashi T."/>
            <person name="Oyama M."/>
            <person name="Hata H."/>
            <person name="Watanabe M."/>
            <person name="Komatsu T."/>
            <person name="Mizushima-Sugano J."/>
            <person name="Satoh T."/>
            <person name="Shirai Y."/>
            <person name="Takahashi Y."/>
            <person name="Nakagawa K."/>
            <person name="Okumura K."/>
            <person name="Nagase T."/>
            <person name="Nomura N."/>
            <person name="Kikuchi H."/>
            <person name="Masuho Y."/>
            <person name="Yamashita R."/>
            <person name="Nakai K."/>
            <person name="Yada T."/>
            <person name="Nakamura Y."/>
            <person name="Ohara O."/>
            <person name="Isogai T."/>
            <person name="Sugano S."/>
        </authorList>
    </citation>
    <scope>NUCLEOTIDE SEQUENCE [LARGE SCALE MRNA]</scope>
    <source>
        <tissue>Hippocampus</tissue>
    </source>
</reference>